<proteinExistence type="inferred from homology"/>
<organism>
    <name type="scientific">Salmonella schwarzengrund (strain CVM19633)</name>
    <dbReference type="NCBI Taxonomy" id="439843"/>
    <lineage>
        <taxon>Bacteria</taxon>
        <taxon>Pseudomonadati</taxon>
        <taxon>Pseudomonadota</taxon>
        <taxon>Gammaproteobacteria</taxon>
        <taxon>Enterobacterales</taxon>
        <taxon>Enterobacteriaceae</taxon>
        <taxon>Salmonella</taxon>
    </lineage>
</organism>
<accession>B4TME7</accession>
<feature type="chain" id="PRO_1000126838" description="Large ribosomal subunit protein bL31B">
    <location>
        <begin position="1"/>
        <end position="86"/>
    </location>
</feature>
<reference key="1">
    <citation type="journal article" date="2011" name="J. Bacteriol.">
        <title>Comparative genomics of 28 Salmonella enterica isolates: evidence for CRISPR-mediated adaptive sublineage evolution.</title>
        <authorList>
            <person name="Fricke W.F."/>
            <person name="Mammel M.K."/>
            <person name="McDermott P.F."/>
            <person name="Tartera C."/>
            <person name="White D.G."/>
            <person name="Leclerc J.E."/>
            <person name="Ravel J."/>
            <person name="Cebula T.A."/>
        </authorList>
    </citation>
    <scope>NUCLEOTIDE SEQUENCE [LARGE SCALE GENOMIC DNA]</scope>
    <source>
        <strain>CVM19633</strain>
    </source>
</reference>
<protein>
    <recommendedName>
        <fullName evidence="1">Large ribosomal subunit protein bL31B</fullName>
    </recommendedName>
    <alternativeName>
        <fullName evidence="2">50S ribosomal protein L31 type B</fullName>
    </alternativeName>
</protein>
<dbReference type="EMBL" id="CP001127">
    <property type="protein sequence ID" value="ACF90497.1"/>
    <property type="molecule type" value="Genomic_DNA"/>
</dbReference>
<dbReference type="RefSeq" id="WP_000801415.1">
    <property type="nucleotide sequence ID" value="NC_011094.1"/>
</dbReference>
<dbReference type="SMR" id="B4TME7"/>
<dbReference type="KEGG" id="sew:SeSA_A0529"/>
<dbReference type="HOGENOM" id="CLU_114306_2_1_6"/>
<dbReference type="Proteomes" id="UP000001865">
    <property type="component" value="Chromosome"/>
</dbReference>
<dbReference type="GO" id="GO:1990904">
    <property type="term" value="C:ribonucleoprotein complex"/>
    <property type="evidence" value="ECO:0007669"/>
    <property type="project" value="UniProtKB-KW"/>
</dbReference>
<dbReference type="GO" id="GO:0005840">
    <property type="term" value="C:ribosome"/>
    <property type="evidence" value="ECO:0007669"/>
    <property type="project" value="UniProtKB-KW"/>
</dbReference>
<dbReference type="GO" id="GO:0003735">
    <property type="term" value="F:structural constituent of ribosome"/>
    <property type="evidence" value="ECO:0007669"/>
    <property type="project" value="InterPro"/>
</dbReference>
<dbReference type="GO" id="GO:0006412">
    <property type="term" value="P:translation"/>
    <property type="evidence" value="ECO:0007669"/>
    <property type="project" value="UniProtKB-UniRule"/>
</dbReference>
<dbReference type="Gene3D" id="4.10.830.30">
    <property type="entry name" value="Ribosomal protein L31"/>
    <property type="match status" value="1"/>
</dbReference>
<dbReference type="HAMAP" id="MF_00502">
    <property type="entry name" value="Ribosomal_bL31_2"/>
    <property type="match status" value="1"/>
</dbReference>
<dbReference type="InterPro" id="IPR034704">
    <property type="entry name" value="Ribosomal_bL28/bL31-like_sf"/>
</dbReference>
<dbReference type="InterPro" id="IPR002150">
    <property type="entry name" value="Ribosomal_bL31"/>
</dbReference>
<dbReference type="InterPro" id="IPR027493">
    <property type="entry name" value="Ribosomal_bL31_B"/>
</dbReference>
<dbReference type="InterPro" id="IPR042105">
    <property type="entry name" value="Ribosomal_bL31_sf"/>
</dbReference>
<dbReference type="NCBIfam" id="TIGR00105">
    <property type="entry name" value="L31"/>
    <property type="match status" value="1"/>
</dbReference>
<dbReference type="NCBIfam" id="NF002462">
    <property type="entry name" value="PRK01678.1"/>
    <property type="match status" value="1"/>
</dbReference>
<dbReference type="PANTHER" id="PTHR33280">
    <property type="entry name" value="50S RIBOSOMAL PROTEIN L31, CHLOROPLASTIC"/>
    <property type="match status" value="1"/>
</dbReference>
<dbReference type="PANTHER" id="PTHR33280:SF1">
    <property type="entry name" value="LARGE RIBOSOMAL SUBUNIT PROTEIN BL31C"/>
    <property type="match status" value="1"/>
</dbReference>
<dbReference type="Pfam" id="PF01197">
    <property type="entry name" value="Ribosomal_L31"/>
    <property type="match status" value="1"/>
</dbReference>
<dbReference type="PRINTS" id="PR01249">
    <property type="entry name" value="RIBOSOMALL31"/>
</dbReference>
<dbReference type="SUPFAM" id="SSF143800">
    <property type="entry name" value="L28p-like"/>
    <property type="match status" value="1"/>
</dbReference>
<sequence length="86" mass="9815">MKPDIHPVYRTVVFHDTSANEYVKVGSTIKTEREIELDGVTYPYVTIDVSSKSHPFYTGRQKTFDSESSAARFQKRFGHFIGAKRG</sequence>
<name>RL31B_SALSV</name>
<comment type="subunit">
    <text evidence="1">Part of the 50S ribosomal subunit.</text>
</comment>
<comment type="similarity">
    <text evidence="1">Belongs to the bacterial ribosomal protein bL31 family. Type B subfamily.</text>
</comment>
<gene>
    <name evidence="1" type="primary">rpmE2</name>
    <name type="ordered locus">SeSA_A0529</name>
</gene>
<keyword id="KW-0687">Ribonucleoprotein</keyword>
<keyword id="KW-0689">Ribosomal protein</keyword>
<evidence type="ECO:0000255" key="1">
    <source>
        <dbReference type="HAMAP-Rule" id="MF_00502"/>
    </source>
</evidence>
<evidence type="ECO:0000305" key="2"/>